<keyword id="KW-0046">Antibiotic resistance</keyword>
<keyword id="KW-1003">Cell membrane</keyword>
<keyword id="KW-0133">Cell shape</keyword>
<keyword id="KW-0961">Cell wall biogenesis/degradation</keyword>
<keyword id="KW-0378">Hydrolase</keyword>
<keyword id="KW-0472">Membrane</keyword>
<keyword id="KW-0573">Peptidoglycan synthesis</keyword>
<keyword id="KW-1185">Reference proteome</keyword>
<keyword id="KW-0812">Transmembrane</keyword>
<keyword id="KW-1133">Transmembrane helix</keyword>
<reference key="1">
    <citation type="journal article" date="2005" name="Proc. Natl. Acad. Sci. U.S.A.">
        <title>The complete genome sequence of Mycobacterium avium subspecies paratuberculosis.</title>
        <authorList>
            <person name="Li L."/>
            <person name="Bannantine J.P."/>
            <person name="Zhang Q."/>
            <person name="Amonsin A."/>
            <person name="May B.J."/>
            <person name="Alt D."/>
            <person name="Banerji N."/>
            <person name="Kanjilal S."/>
            <person name="Kapur V."/>
        </authorList>
    </citation>
    <scope>NUCLEOTIDE SEQUENCE [LARGE SCALE GENOMIC DNA]</scope>
    <source>
        <strain>ATCC BAA-968 / K-10</strain>
    </source>
</reference>
<comment type="function">
    <text evidence="1">Catalyzes the dephosphorylation of undecaprenyl diphosphate (UPP). Confers resistance to bacitracin.</text>
</comment>
<comment type="catalytic activity">
    <reaction evidence="1">
        <text>di-trans,octa-cis-undecaprenyl diphosphate + H2O = di-trans,octa-cis-undecaprenyl phosphate + phosphate + H(+)</text>
        <dbReference type="Rhea" id="RHEA:28094"/>
        <dbReference type="ChEBI" id="CHEBI:15377"/>
        <dbReference type="ChEBI" id="CHEBI:15378"/>
        <dbReference type="ChEBI" id="CHEBI:43474"/>
        <dbReference type="ChEBI" id="CHEBI:58405"/>
        <dbReference type="ChEBI" id="CHEBI:60392"/>
        <dbReference type="EC" id="3.6.1.27"/>
    </reaction>
</comment>
<comment type="subcellular location">
    <subcellularLocation>
        <location evidence="1">Cell membrane</location>
        <topology evidence="1">Multi-pass membrane protein</topology>
    </subcellularLocation>
</comment>
<comment type="miscellaneous">
    <text>Bacitracin is thought to be involved in the inhibition of peptidoglycan synthesis by sequestering undecaprenyl diphosphate, thereby reducing the pool of lipid carrier available.</text>
</comment>
<comment type="similarity">
    <text evidence="1">Belongs to the UppP family.</text>
</comment>
<comment type="sequence caution" evidence="2">
    <conflict type="erroneous initiation">
        <sequence resource="EMBL-CDS" id="AAS03892"/>
    </conflict>
</comment>
<organism>
    <name type="scientific">Mycolicibacterium paratuberculosis (strain ATCC BAA-968 / K-10)</name>
    <name type="common">Mycobacterium paratuberculosis</name>
    <dbReference type="NCBI Taxonomy" id="262316"/>
    <lineage>
        <taxon>Bacteria</taxon>
        <taxon>Bacillati</taxon>
        <taxon>Actinomycetota</taxon>
        <taxon>Actinomycetes</taxon>
        <taxon>Mycobacteriales</taxon>
        <taxon>Mycobacteriaceae</taxon>
        <taxon>Mycobacterium</taxon>
        <taxon>Mycobacterium avium complex (MAC)</taxon>
    </lineage>
</organism>
<evidence type="ECO:0000255" key="1">
    <source>
        <dbReference type="HAMAP-Rule" id="MF_01006"/>
    </source>
</evidence>
<evidence type="ECO:0000305" key="2"/>
<accession>P60939</accession>
<sequence length="305" mass="32549">MTAHLSYVEAVVVGAFQGVTELFPVSSLGHAVLVPALVGGRWAQDLSVSAHRSPYLAFIVGLHVATAAALLVFFWRDWVRILAGFFSSLRHRRIRTPDERLAWLIVVGTIPVGLAGLALEQLFRTTLGKPVPAAAFLLLNGVALYAGEVLRRRVAPVADEPAVPDAEQQHGDEASDNRLAQLPLRRGVLIGAAQILALLPGISRSGITIVAGLWRGLSHEDAARFSFLLATPIILAAGVYKIPELFGPLGAGIGGQVLAGSIASFVCAYLAVRYLTRYFQTRTLTPFAIYCAVAGGASLVWLALR</sequence>
<proteinExistence type="inferred from homology"/>
<protein>
    <recommendedName>
        <fullName evidence="1">Undecaprenyl-diphosphatase</fullName>
        <ecNumber evidence="1">3.6.1.27</ecNumber>
    </recommendedName>
    <alternativeName>
        <fullName evidence="1">Bacitracin resistance protein</fullName>
    </alternativeName>
    <alternativeName>
        <fullName evidence="1">Undecaprenyl pyrophosphate phosphatase</fullName>
    </alternativeName>
</protein>
<name>UPPP_MYCPA</name>
<gene>
    <name evidence="1" type="primary">uppP</name>
    <name type="synonym">bacA</name>
    <name type="synonym">upk</name>
    <name type="ordered locus">MAP_1575c</name>
</gene>
<feature type="chain" id="PRO_0000151165" description="Undecaprenyl-diphosphatase">
    <location>
        <begin position="1"/>
        <end position="305"/>
    </location>
</feature>
<feature type="transmembrane region" description="Helical" evidence="1">
    <location>
        <begin position="18"/>
        <end position="38"/>
    </location>
</feature>
<feature type="transmembrane region" description="Helical" evidence="1">
    <location>
        <begin position="55"/>
        <end position="75"/>
    </location>
</feature>
<feature type="transmembrane region" description="Helical" evidence="1">
    <location>
        <begin position="103"/>
        <end position="123"/>
    </location>
</feature>
<feature type="transmembrane region" description="Helical" evidence="1">
    <location>
        <begin position="130"/>
        <end position="150"/>
    </location>
</feature>
<feature type="transmembrane region" description="Helical" evidence="1">
    <location>
        <begin position="187"/>
        <end position="207"/>
    </location>
</feature>
<feature type="transmembrane region" description="Helical" evidence="1">
    <location>
        <begin position="225"/>
        <end position="245"/>
    </location>
</feature>
<feature type="transmembrane region" description="Helical" evidence="1">
    <location>
        <begin position="246"/>
        <end position="266"/>
    </location>
</feature>
<feature type="transmembrane region" description="Helical" evidence="1">
    <location>
        <begin position="284"/>
        <end position="304"/>
    </location>
</feature>
<dbReference type="EC" id="3.6.1.27" evidence="1"/>
<dbReference type="EMBL" id="AE016958">
    <property type="protein sequence ID" value="AAS03892.1"/>
    <property type="status" value="ALT_INIT"/>
    <property type="molecule type" value="Genomic_DNA"/>
</dbReference>
<dbReference type="RefSeq" id="WP_003876541.1">
    <property type="nucleotide sequence ID" value="NZ_CP106873.1"/>
</dbReference>
<dbReference type="SMR" id="P60939"/>
<dbReference type="STRING" id="262316.MAP_1575c"/>
<dbReference type="KEGG" id="mpa:MAP_1575c"/>
<dbReference type="PATRIC" id="fig|262316.17.peg.1668"/>
<dbReference type="eggNOG" id="COG1968">
    <property type="taxonomic scope" value="Bacteria"/>
</dbReference>
<dbReference type="HOGENOM" id="CLU_060296_1_1_11"/>
<dbReference type="Proteomes" id="UP000000580">
    <property type="component" value="Chromosome"/>
</dbReference>
<dbReference type="GO" id="GO:0005886">
    <property type="term" value="C:plasma membrane"/>
    <property type="evidence" value="ECO:0007669"/>
    <property type="project" value="UniProtKB-SubCell"/>
</dbReference>
<dbReference type="GO" id="GO:0050380">
    <property type="term" value="F:undecaprenyl-diphosphatase activity"/>
    <property type="evidence" value="ECO:0007669"/>
    <property type="project" value="UniProtKB-UniRule"/>
</dbReference>
<dbReference type="GO" id="GO:0071555">
    <property type="term" value="P:cell wall organization"/>
    <property type="evidence" value="ECO:0007669"/>
    <property type="project" value="UniProtKB-KW"/>
</dbReference>
<dbReference type="GO" id="GO:0009252">
    <property type="term" value="P:peptidoglycan biosynthetic process"/>
    <property type="evidence" value="ECO:0007669"/>
    <property type="project" value="UniProtKB-KW"/>
</dbReference>
<dbReference type="GO" id="GO:0008360">
    <property type="term" value="P:regulation of cell shape"/>
    <property type="evidence" value="ECO:0007669"/>
    <property type="project" value="UniProtKB-KW"/>
</dbReference>
<dbReference type="GO" id="GO:0046677">
    <property type="term" value="P:response to antibiotic"/>
    <property type="evidence" value="ECO:0007669"/>
    <property type="project" value="UniProtKB-UniRule"/>
</dbReference>
<dbReference type="HAMAP" id="MF_01006">
    <property type="entry name" value="Undec_diphosphatase"/>
    <property type="match status" value="1"/>
</dbReference>
<dbReference type="InterPro" id="IPR003824">
    <property type="entry name" value="UppP"/>
</dbReference>
<dbReference type="NCBIfam" id="NF001395">
    <property type="entry name" value="PRK00281.3-1"/>
    <property type="match status" value="1"/>
</dbReference>
<dbReference type="PANTHER" id="PTHR30622">
    <property type="entry name" value="UNDECAPRENYL-DIPHOSPHATASE"/>
    <property type="match status" value="1"/>
</dbReference>
<dbReference type="PANTHER" id="PTHR30622:SF4">
    <property type="entry name" value="UNDECAPRENYL-DIPHOSPHATASE"/>
    <property type="match status" value="1"/>
</dbReference>
<dbReference type="Pfam" id="PF02673">
    <property type="entry name" value="BacA"/>
    <property type="match status" value="1"/>
</dbReference>